<evidence type="ECO:0000255" key="1">
    <source>
        <dbReference type="HAMAP-Rule" id="MF_03225"/>
    </source>
</evidence>
<evidence type="ECO:0000269" key="2">
    <source>
    </source>
</evidence>
<comment type="function">
    <text evidence="1">Pyridoxal 5'-phosphate (PLP)-binding protein, which may be involved in intracellular homeostatic regulation of pyridoxal 5'-phosphate (PLP), the active form of vitamin B6.</text>
</comment>
<comment type="subcellular location">
    <subcellularLocation>
        <location evidence="2">Cytoplasm</location>
    </subcellularLocation>
    <subcellularLocation>
        <location evidence="2">Nucleus</location>
    </subcellularLocation>
</comment>
<comment type="similarity">
    <text evidence="1">Belongs to the pyridoxal phosphate-binding protein YggS/PROSC family.</text>
</comment>
<name>PLPHP_SCHPO</name>
<organism>
    <name type="scientific">Schizosaccharomyces pombe (strain 972 / ATCC 24843)</name>
    <name type="common">Fission yeast</name>
    <dbReference type="NCBI Taxonomy" id="284812"/>
    <lineage>
        <taxon>Eukaryota</taxon>
        <taxon>Fungi</taxon>
        <taxon>Dikarya</taxon>
        <taxon>Ascomycota</taxon>
        <taxon>Taphrinomycotina</taxon>
        <taxon>Schizosaccharomycetes</taxon>
        <taxon>Schizosaccharomycetales</taxon>
        <taxon>Schizosaccharomycetaceae</taxon>
        <taxon>Schizosaccharomyces</taxon>
    </lineage>
</organism>
<accession>Q9P6Q1</accession>
<feature type="chain" id="PRO_0000316622" description="Pyridoxal phosphate homeostasis protein">
    <location>
        <begin position="1"/>
        <end position="237"/>
    </location>
</feature>
<feature type="modified residue" description="N6-(pyridoxal phosphate)lysine" evidence="1">
    <location>
        <position position="31"/>
    </location>
</feature>
<gene>
    <name type="ORF">SPAC644.09</name>
</gene>
<sequence length="237" mass="26393">MSTIHSCLDLIRSQIQQSANGRNVLLVAVSKFHPVETLMEAYNAGQRHFGENYMQEFLKKVELMPDDVQWHFIGSLQSSKCKKIASVKNLYSIETIDTEKKARLVNSAREALQLPLNVYIQVNTSGEENKGGVTPSKVLELCKQVQDMKYLRLKGLMTIGSISNSQLSDHNPDFQVLSDLRESLQNELGIPLQLSMGMSSDYLLAIKYGSDSVRVGSSIFGSRPTEKPSDVHISASK</sequence>
<reference key="1">
    <citation type="journal article" date="2002" name="Nature">
        <title>The genome sequence of Schizosaccharomyces pombe.</title>
        <authorList>
            <person name="Wood V."/>
            <person name="Gwilliam R."/>
            <person name="Rajandream M.A."/>
            <person name="Lyne M.H."/>
            <person name="Lyne R."/>
            <person name="Stewart A."/>
            <person name="Sgouros J.G."/>
            <person name="Peat N."/>
            <person name="Hayles J."/>
            <person name="Baker S.G."/>
            <person name="Basham D."/>
            <person name="Bowman S."/>
            <person name="Brooks K."/>
            <person name="Brown D."/>
            <person name="Brown S."/>
            <person name="Chillingworth T."/>
            <person name="Churcher C.M."/>
            <person name="Collins M."/>
            <person name="Connor R."/>
            <person name="Cronin A."/>
            <person name="Davis P."/>
            <person name="Feltwell T."/>
            <person name="Fraser A."/>
            <person name="Gentles S."/>
            <person name="Goble A."/>
            <person name="Hamlin N."/>
            <person name="Harris D.E."/>
            <person name="Hidalgo J."/>
            <person name="Hodgson G."/>
            <person name="Holroyd S."/>
            <person name="Hornsby T."/>
            <person name="Howarth S."/>
            <person name="Huckle E.J."/>
            <person name="Hunt S."/>
            <person name="Jagels K."/>
            <person name="James K.D."/>
            <person name="Jones L."/>
            <person name="Jones M."/>
            <person name="Leather S."/>
            <person name="McDonald S."/>
            <person name="McLean J."/>
            <person name="Mooney P."/>
            <person name="Moule S."/>
            <person name="Mungall K.L."/>
            <person name="Murphy L.D."/>
            <person name="Niblett D."/>
            <person name="Odell C."/>
            <person name="Oliver K."/>
            <person name="O'Neil S."/>
            <person name="Pearson D."/>
            <person name="Quail M.A."/>
            <person name="Rabbinowitsch E."/>
            <person name="Rutherford K.M."/>
            <person name="Rutter S."/>
            <person name="Saunders D."/>
            <person name="Seeger K."/>
            <person name="Sharp S."/>
            <person name="Skelton J."/>
            <person name="Simmonds M.N."/>
            <person name="Squares R."/>
            <person name="Squares S."/>
            <person name="Stevens K."/>
            <person name="Taylor K."/>
            <person name="Taylor R.G."/>
            <person name="Tivey A."/>
            <person name="Walsh S.V."/>
            <person name="Warren T."/>
            <person name="Whitehead S."/>
            <person name="Woodward J.R."/>
            <person name="Volckaert G."/>
            <person name="Aert R."/>
            <person name="Robben J."/>
            <person name="Grymonprez B."/>
            <person name="Weltjens I."/>
            <person name="Vanstreels E."/>
            <person name="Rieger M."/>
            <person name="Schaefer M."/>
            <person name="Mueller-Auer S."/>
            <person name="Gabel C."/>
            <person name="Fuchs M."/>
            <person name="Duesterhoeft A."/>
            <person name="Fritzc C."/>
            <person name="Holzer E."/>
            <person name="Moestl D."/>
            <person name="Hilbert H."/>
            <person name="Borzym K."/>
            <person name="Langer I."/>
            <person name="Beck A."/>
            <person name="Lehrach H."/>
            <person name="Reinhardt R."/>
            <person name="Pohl T.M."/>
            <person name="Eger P."/>
            <person name="Zimmermann W."/>
            <person name="Wedler H."/>
            <person name="Wambutt R."/>
            <person name="Purnelle B."/>
            <person name="Goffeau A."/>
            <person name="Cadieu E."/>
            <person name="Dreano S."/>
            <person name="Gloux S."/>
            <person name="Lelaure V."/>
            <person name="Mottier S."/>
            <person name="Galibert F."/>
            <person name="Aves S.J."/>
            <person name="Xiang Z."/>
            <person name="Hunt C."/>
            <person name="Moore K."/>
            <person name="Hurst S.M."/>
            <person name="Lucas M."/>
            <person name="Rochet M."/>
            <person name="Gaillardin C."/>
            <person name="Tallada V.A."/>
            <person name="Garzon A."/>
            <person name="Thode G."/>
            <person name="Daga R.R."/>
            <person name="Cruzado L."/>
            <person name="Jimenez J."/>
            <person name="Sanchez M."/>
            <person name="del Rey F."/>
            <person name="Benito J."/>
            <person name="Dominguez A."/>
            <person name="Revuelta J.L."/>
            <person name="Moreno S."/>
            <person name="Armstrong J."/>
            <person name="Forsburg S.L."/>
            <person name="Cerutti L."/>
            <person name="Lowe T."/>
            <person name="McCombie W.R."/>
            <person name="Paulsen I."/>
            <person name="Potashkin J."/>
            <person name="Shpakovski G.V."/>
            <person name="Ussery D."/>
            <person name="Barrell B.G."/>
            <person name="Nurse P."/>
        </authorList>
    </citation>
    <scope>NUCLEOTIDE SEQUENCE [LARGE SCALE GENOMIC DNA]</scope>
    <source>
        <strain>972 / ATCC 24843</strain>
    </source>
</reference>
<reference key="2">
    <citation type="journal article" date="2006" name="Nat. Biotechnol.">
        <title>ORFeome cloning and global analysis of protein localization in the fission yeast Schizosaccharomyces pombe.</title>
        <authorList>
            <person name="Matsuyama A."/>
            <person name="Arai R."/>
            <person name="Yashiroda Y."/>
            <person name="Shirai A."/>
            <person name="Kamata A."/>
            <person name="Sekido S."/>
            <person name="Kobayashi Y."/>
            <person name="Hashimoto A."/>
            <person name="Hamamoto M."/>
            <person name="Hiraoka Y."/>
            <person name="Horinouchi S."/>
            <person name="Yoshida M."/>
        </authorList>
    </citation>
    <scope>SUBCELLULAR LOCATION [LARGE SCALE ANALYSIS]</scope>
</reference>
<protein>
    <recommendedName>
        <fullName evidence="1">Pyridoxal phosphate homeostasis protein</fullName>
        <shortName evidence="1">PLP homeostasis protein</shortName>
    </recommendedName>
</protein>
<dbReference type="EMBL" id="CU329670">
    <property type="protein sequence ID" value="CAB90136.1"/>
    <property type="molecule type" value="Genomic_DNA"/>
</dbReference>
<dbReference type="RefSeq" id="NP_593877.1">
    <property type="nucleotide sequence ID" value="NM_001019307.2"/>
</dbReference>
<dbReference type="SMR" id="Q9P6Q1"/>
<dbReference type="BioGRID" id="280072">
    <property type="interactions" value="15"/>
</dbReference>
<dbReference type="FunCoup" id="Q9P6Q1">
    <property type="interactions" value="296"/>
</dbReference>
<dbReference type="STRING" id="284812.Q9P6Q1"/>
<dbReference type="iPTMnet" id="Q9P6Q1"/>
<dbReference type="PaxDb" id="4896-SPAC644.09.1"/>
<dbReference type="EnsemblFungi" id="SPAC644.09.1">
    <property type="protein sequence ID" value="SPAC644.09.1:pep"/>
    <property type="gene ID" value="SPAC644.09"/>
</dbReference>
<dbReference type="KEGG" id="spo:2543658"/>
<dbReference type="PomBase" id="SPAC644.09"/>
<dbReference type="VEuPathDB" id="FungiDB:SPAC644.09"/>
<dbReference type="eggNOG" id="KOG3157">
    <property type="taxonomic scope" value="Eukaryota"/>
</dbReference>
<dbReference type="HOGENOM" id="CLU_059988_2_0_1"/>
<dbReference type="InParanoid" id="Q9P6Q1"/>
<dbReference type="OMA" id="PLEWHMI"/>
<dbReference type="PhylomeDB" id="Q9P6Q1"/>
<dbReference type="PRO" id="PR:Q9P6Q1"/>
<dbReference type="Proteomes" id="UP000002485">
    <property type="component" value="Chromosome I"/>
</dbReference>
<dbReference type="GO" id="GO:0005737">
    <property type="term" value="C:cytoplasm"/>
    <property type="evidence" value="ECO:0000318"/>
    <property type="project" value="GO_Central"/>
</dbReference>
<dbReference type="GO" id="GO:0005829">
    <property type="term" value="C:cytosol"/>
    <property type="evidence" value="ECO:0007005"/>
    <property type="project" value="PomBase"/>
</dbReference>
<dbReference type="GO" id="GO:0005634">
    <property type="term" value="C:nucleus"/>
    <property type="evidence" value="ECO:0007005"/>
    <property type="project" value="PomBase"/>
</dbReference>
<dbReference type="GO" id="GO:0030170">
    <property type="term" value="F:pyridoxal phosphate binding"/>
    <property type="evidence" value="ECO:0000318"/>
    <property type="project" value="GO_Central"/>
</dbReference>
<dbReference type="GO" id="GO:0042816">
    <property type="term" value="P:vitamin B6 metabolic process"/>
    <property type="evidence" value="ECO:0000318"/>
    <property type="project" value="GO_Central"/>
</dbReference>
<dbReference type="CDD" id="cd06822">
    <property type="entry name" value="PLPDE_III_YBL036c_euk"/>
    <property type="match status" value="1"/>
</dbReference>
<dbReference type="FunFam" id="3.20.20.10:FF:000023">
    <property type="entry name" value="Pyridoxal phosphate homeostasis protein"/>
    <property type="match status" value="1"/>
</dbReference>
<dbReference type="Gene3D" id="3.20.20.10">
    <property type="entry name" value="Alanine racemase"/>
    <property type="match status" value="1"/>
</dbReference>
<dbReference type="HAMAP" id="MF_02087">
    <property type="entry name" value="PLP_homeostasis"/>
    <property type="match status" value="1"/>
</dbReference>
<dbReference type="InterPro" id="IPR001608">
    <property type="entry name" value="Ala_racemase_N"/>
</dbReference>
<dbReference type="InterPro" id="IPR029066">
    <property type="entry name" value="PLP-binding_barrel"/>
</dbReference>
<dbReference type="InterPro" id="IPR011078">
    <property type="entry name" value="PyrdxlP_homeostasis"/>
</dbReference>
<dbReference type="NCBIfam" id="TIGR00044">
    <property type="entry name" value="YggS family pyridoxal phosphate-dependent enzyme"/>
    <property type="match status" value="1"/>
</dbReference>
<dbReference type="PANTHER" id="PTHR10146">
    <property type="entry name" value="PROLINE SYNTHETASE CO-TRANSCRIBED BACTERIAL HOMOLOG PROTEIN"/>
    <property type="match status" value="1"/>
</dbReference>
<dbReference type="PANTHER" id="PTHR10146:SF14">
    <property type="entry name" value="PYRIDOXAL PHOSPHATE HOMEOSTASIS PROTEIN"/>
    <property type="match status" value="1"/>
</dbReference>
<dbReference type="Pfam" id="PF01168">
    <property type="entry name" value="Ala_racemase_N"/>
    <property type="match status" value="1"/>
</dbReference>
<dbReference type="PIRSF" id="PIRSF004848">
    <property type="entry name" value="YBL036c_PLPDEIII"/>
    <property type="match status" value="1"/>
</dbReference>
<dbReference type="SUPFAM" id="SSF51419">
    <property type="entry name" value="PLP-binding barrel"/>
    <property type="match status" value="1"/>
</dbReference>
<keyword id="KW-0963">Cytoplasm</keyword>
<keyword id="KW-0539">Nucleus</keyword>
<keyword id="KW-0663">Pyridoxal phosphate</keyword>
<keyword id="KW-1185">Reference proteome</keyword>
<proteinExistence type="inferred from homology"/>